<protein>
    <recommendedName>
        <fullName evidence="1">Small ribosomal subunit protein uS15</fullName>
    </recommendedName>
    <alternativeName>
        <fullName evidence="2">30S ribosomal protein S15</fullName>
    </alternativeName>
</protein>
<sequence>MSLSVEAKAKIVAEFGRDAKDTGSSEVQIALLTAQINHLQAHFAEHKKDHHGRRGLLRMVSRRRKLLDYLKRTDLAKYSETIARLGLRR</sequence>
<comment type="function">
    <text evidence="1">One of the primary rRNA binding proteins, it binds directly to 16S rRNA where it helps nucleate assembly of the platform of the 30S subunit by binding and bridging several RNA helices of the 16S rRNA.</text>
</comment>
<comment type="function">
    <text evidence="1">Forms an intersubunit bridge (bridge B4) with the 23S rRNA of the 50S subunit in the ribosome.</text>
</comment>
<comment type="subunit">
    <text evidence="1">Part of the 30S ribosomal subunit. Forms a bridge to the 50S subunit in the 70S ribosome, contacting the 23S rRNA.</text>
</comment>
<comment type="similarity">
    <text evidence="1">Belongs to the universal ribosomal protein uS15 family.</text>
</comment>
<proteinExistence type="inferred from homology"/>
<evidence type="ECO:0000255" key="1">
    <source>
        <dbReference type="HAMAP-Rule" id="MF_01343"/>
    </source>
</evidence>
<evidence type="ECO:0000305" key="2"/>
<feature type="chain" id="PRO_1000166423" description="Small ribosomal subunit protein uS15">
    <location>
        <begin position="1"/>
        <end position="89"/>
    </location>
</feature>
<keyword id="KW-1185">Reference proteome</keyword>
<keyword id="KW-0687">Ribonucleoprotein</keyword>
<keyword id="KW-0689">Ribosomal protein</keyword>
<keyword id="KW-0694">RNA-binding</keyword>
<keyword id="KW-0699">rRNA-binding</keyword>
<name>RS15_GLAP5</name>
<reference key="1">
    <citation type="journal article" date="2009" name="J. Bacteriol.">
        <title>Complete genome sequence of Haemophilus parasuis SH0165.</title>
        <authorList>
            <person name="Yue M."/>
            <person name="Yang F."/>
            <person name="Yang J."/>
            <person name="Bei W."/>
            <person name="Cai X."/>
            <person name="Chen L."/>
            <person name="Dong J."/>
            <person name="Zhou R."/>
            <person name="Jin M."/>
            <person name="Jin Q."/>
            <person name="Chen H."/>
        </authorList>
    </citation>
    <scope>NUCLEOTIDE SEQUENCE [LARGE SCALE GENOMIC DNA]</scope>
    <source>
        <strain>SH0165</strain>
    </source>
</reference>
<gene>
    <name evidence="1" type="primary">rpsO</name>
    <name type="ordered locus">HAPS_1131</name>
</gene>
<organism>
    <name type="scientific">Glaesserella parasuis serovar 5 (strain SH0165)</name>
    <name type="common">Haemophilus parasuis</name>
    <dbReference type="NCBI Taxonomy" id="557723"/>
    <lineage>
        <taxon>Bacteria</taxon>
        <taxon>Pseudomonadati</taxon>
        <taxon>Pseudomonadota</taxon>
        <taxon>Gammaproteobacteria</taxon>
        <taxon>Pasteurellales</taxon>
        <taxon>Pasteurellaceae</taxon>
        <taxon>Glaesserella</taxon>
    </lineage>
</organism>
<dbReference type="EMBL" id="CP001321">
    <property type="protein sequence ID" value="ACL32744.1"/>
    <property type="molecule type" value="Genomic_DNA"/>
</dbReference>
<dbReference type="RefSeq" id="WP_005597777.1">
    <property type="nucleotide sequence ID" value="NC_011852.1"/>
</dbReference>
<dbReference type="SMR" id="B8F5Z2"/>
<dbReference type="STRING" id="557723.HAPS_1131"/>
<dbReference type="GeneID" id="67368470"/>
<dbReference type="KEGG" id="hap:HAPS_1131"/>
<dbReference type="HOGENOM" id="CLU_148518_0_0_6"/>
<dbReference type="Proteomes" id="UP000006743">
    <property type="component" value="Chromosome"/>
</dbReference>
<dbReference type="GO" id="GO:0022627">
    <property type="term" value="C:cytosolic small ribosomal subunit"/>
    <property type="evidence" value="ECO:0007669"/>
    <property type="project" value="TreeGrafter"/>
</dbReference>
<dbReference type="GO" id="GO:0019843">
    <property type="term" value="F:rRNA binding"/>
    <property type="evidence" value="ECO:0007669"/>
    <property type="project" value="UniProtKB-UniRule"/>
</dbReference>
<dbReference type="GO" id="GO:0003735">
    <property type="term" value="F:structural constituent of ribosome"/>
    <property type="evidence" value="ECO:0007669"/>
    <property type="project" value="InterPro"/>
</dbReference>
<dbReference type="GO" id="GO:0006412">
    <property type="term" value="P:translation"/>
    <property type="evidence" value="ECO:0007669"/>
    <property type="project" value="UniProtKB-UniRule"/>
</dbReference>
<dbReference type="CDD" id="cd00353">
    <property type="entry name" value="Ribosomal_S15p_S13e"/>
    <property type="match status" value="1"/>
</dbReference>
<dbReference type="FunFam" id="1.10.287.10:FF:000002">
    <property type="entry name" value="30S ribosomal protein S15"/>
    <property type="match status" value="1"/>
</dbReference>
<dbReference type="Gene3D" id="6.10.250.3130">
    <property type="match status" value="1"/>
</dbReference>
<dbReference type="Gene3D" id="1.10.287.10">
    <property type="entry name" value="S15/NS1, RNA-binding"/>
    <property type="match status" value="1"/>
</dbReference>
<dbReference type="HAMAP" id="MF_01343_B">
    <property type="entry name" value="Ribosomal_uS15_B"/>
    <property type="match status" value="1"/>
</dbReference>
<dbReference type="InterPro" id="IPR000589">
    <property type="entry name" value="Ribosomal_uS15"/>
</dbReference>
<dbReference type="InterPro" id="IPR005290">
    <property type="entry name" value="Ribosomal_uS15_bac-type"/>
</dbReference>
<dbReference type="InterPro" id="IPR009068">
    <property type="entry name" value="uS15_NS1_RNA-bd_sf"/>
</dbReference>
<dbReference type="NCBIfam" id="TIGR00952">
    <property type="entry name" value="S15_bact"/>
    <property type="match status" value="1"/>
</dbReference>
<dbReference type="PANTHER" id="PTHR23321">
    <property type="entry name" value="RIBOSOMAL PROTEIN S15, BACTERIAL AND ORGANELLAR"/>
    <property type="match status" value="1"/>
</dbReference>
<dbReference type="PANTHER" id="PTHR23321:SF26">
    <property type="entry name" value="SMALL RIBOSOMAL SUBUNIT PROTEIN US15M"/>
    <property type="match status" value="1"/>
</dbReference>
<dbReference type="Pfam" id="PF00312">
    <property type="entry name" value="Ribosomal_S15"/>
    <property type="match status" value="1"/>
</dbReference>
<dbReference type="SMART" id="SM01387">
    <property type="entry name" value="Ribosomal_S15"/>
    <property type="match status" value="1"/>
</dbReference>
<dbReference type="SUPFAM" id="SSF47060">
    <property type="entry name" value="S15/NS1 RNA-binding domain"/>
    <property type="match status" value="1"/>
</dbReference>
<dbReference type="PROSITE" id="PS00362">
    <property type="entry name" value="RIBOSOMAL_S15"/>
    <property type="match status" value="1"/>
</dbReference>
<accession>B8F5Z2</accession>